<comment type="function">
    <text evidence="1">Allows bacterial pathogens to use the host heme as an iron source. Catalyzes the oxidative degradation of the heme macrocyclic porphyrin ring to the oxo-bilirubin chromophore staphylobilin (a mixture of the linear tetrapyrroles 5-oxo-delta-bilirubin and 15-oxo-beta-bilirubin) in the presence of a suitable electron donor such as ascorbate or NADPH--cytochrome P450 reductase, with subsequent release of free iron.</text>
</comment>
<comment type="catalytic activity">
    <reaction evidence="1">
        <text>heme b + 5 AH2 + 4 O2 + 2 H(+) = delta-staphylobilin + Fe(2+) + formaldehyde + 5 A + 4 H2O</text>
        <dbReference type="Rhea" id="RHEA:37039"/>
        <dbReference type="ChEBI" id="CHEBI:13193"/>
        <dbReference type="ChEBI" id="CHEBI:15377"/>
        <dbReference type="ChEBI" id="CHEBI:15378"/>
        <dbReference type="ChEBI" id="CHEBI:15379"/>
        <dbReference type="ChEBI" id="CHEBI:16842"/>
        <dbReference type="ChEBI" id="CHEBI:17499"/>
        <dbReference type="ChEBI" id="CHEBI:29033"/>
        <dbReference type="ChEBI" id="CHEBI:60344"/>
        <dbReference type="ChEBI" id="CHEBI:74361"/>
        <dbReference type="EC" id="1.14.99.48"/>
    </reaction>
</comment>
<comment type="catalytic activity">
    <reaction evidence="1">
        <text>heme b + 5 AH2 + 4 O2 + 2 H(+) = beta-staphylobilin + Fe(2+) + formaldehyde + 5 A + 4 H2O</text>
        <dbReference type="Rhea" id="RHEA:37363"/>
        <dbReference type="ChEBI" id="CHEBI:13193"/>
        <dbReference type="ChEBI" id="CHEBI:15377"/>
        <dbReference type="ChEBI" id="CHEBI:15378"/>
        <dbReference type="ChEBI" id="CHEBI:15379"/>
        <dbReference type="ChEBI" id="CHEBI:16842"/>
        <dbReference type="ChEBI" id="CHEBI:17499"/>
        <dbReference type="ChEBI" id="CHEBI:29033"/>
        <dbReference type="ChEBI" id="CHEBI:60344"/>
        <dbReference type="ChEBI" id="CHEBI:74362"/>
        <dbReference type="EC" id="1.14.99.48"/>
    </reaction>
</comment>
<comment type="subunit">
    <text evidence="1">Homodimer.</text>
</comment>
<comment type="subcellular location">
    <subcellularLocation>
        <location evidence="1">Cytoplasm</location>
    </subcellularLocation>
</comment>
<comment type="similarity">
    <text evidence="1">Belongs to the antibiotic biosynthesis monooxygenase family. Heme-degrading monooxygenase IsdG subfamily.</text>
</comment>
<protein>
    <recommendedName>
        <fullName evidence="1">Heme oxygenase (staphylobilin-producing) 2</fullName>
        <ecNumber evidence="1">1.14.99.48</ecNumber>
    </recommendedName>
    <alternativeName>
        <fullName evidence="1">Heme-degrading monooxygenase 2</fullName>
    </alternativeName>
    <alternativeName>
        <fullName evidence="1">Iron-regulated surface determinant 2</fullName>
    </alternativeName>
    <alternativeName>
        <fullName evidence="1">Iron-responsive surface determinant 2</fullName>
    </alternativeName>
</protein>
<dbReference type="EC" id="1.14.99.48" evidence="1"/>
<dbReference type="EMBL" id="CP000255">
    <property type="protein sequence ID" value="ABD22465.1"/>
    <property type="molecule type" value="Genomic_DNA"/>
</dbReference>
<dbReference type="RefSeq" id="WP_000480603.1">
    <property type="nucleotide sequence ID" value="NZ_CP027476.1"/>
</dbReference>
<dbReference type="SMR" id="Q2FK96"/>
<dbReference type="KEGG" id="saa:SAUSA300_0168"/>
<dbReference type="HOGENOM" id="CLU_141544_2_1_9"/>
<dbReference type="Proteomes" id="UP000001939">
    <property type="component" value="Chromosome"/>
</dbReference>
<dbReference type="GO" id="GO:0005737">
    <property type="term" value="C:cytoplasm"/>
    <property type="evidence" value="ECO:0007669"/>
    <property type="project" value="UniProtKB-SubCell"/>
</dbReference>
<dbReference type="GO" id="GO:0020037">
    <property type="term" value="F:heme binding"/>
    <property type="evidence" value="ECO:0007669"/>
    <property type="project" value="UniProtKB-UniRule"/>
</dbReference>
<dbReference type="GO" id="GO:0004392">
    <property type="term" value="F:heme oxygenase (decyclizing) activity"/>
    <property type="evidence" value="ECO:0007669"/>
    <property type="project" value="UniProtKB-UniRule"/>
</dbReference>
<dbReference type="GO" id="GO:0005506">
    <property type="term" value="F:iron ion binding"/>
    <property type="evidence" value="ECO:0007669"/>
    <property type="project" value="UniProtKB-UniRule"/>
</dbReference>
<dbReference type="GO" id="GO:0042167">
    <property type="term" value="P:heme catabolic process"/>
    <property type="evidence" value="ECO:0007669"/>
    <property type="project" value="UniProtKB-UniRule"/>
</dbReference>
<dbReference type="GO" id="GO:0033212">
    <property type="term" value="P:iron import into cell"/>
    <property type="evidence" value="ECO:0007669"/>
    <property type="project" value="InterPro"/>
</dbReference>
<dbReference type="Gene3D" id="3.30.70.100">
    <property type="match status" value="1"/>
</dbReference>
<dbReference type="HAMAP" id="MF_01272">
    <property type="entry name" value="Heme_degrading_monooxygenase"/>
    <property type="match status" value="1"/>
</dbReference>
<dbReference type="InterPro" id="IPR007138">
    <property type="entry name" value="ABM_dom"/>
</dbReference>
<dbReference type="InterPro" id="IPR011008">
    <property type="entry name" value="Dimeric_a/b-barrel"/>
</dbReference>
<dbReference type="InterPro" id="IPR050404">
    <property type="entry name" value="Heme-degrading_MO"/>
</dbReference>
<dbReference type="InterPro" id="IPR023953">
    <property type="entry name" value="IsdG"/>
</dbReference>
<dbReference type="NCBIfam" id="NF009838">
    <property type="entry name" value="PRK13313.1"/>
    <property type="match status" value="1"/>
</dbReference>
<dbReference type="PANTHER" id="PTHR34474:SF4">
    <property type="entry name" value="HEME OXYGENASE (STAPHYLOBILIN-PRODUCING) 1"/>
    <property type="match status" value="1"/>
</dbReference>
<dbReference type="PANTHER" id="PTHR34474">
    <property type="entry name" value="SIGNAL TRANSDUCTION PROTEIN TRAP"/>
    <property type="match status" value="1"/>
</dbReference>
<dbReference type="Pfam" id="PF03992">
    <property type="entry name" value="ABM"/>
    <property type="match status" value="1"/>
</dbReference>
<dbReference type="SUPFAM" id="SSF54909">
    <property type="entry name" value="Dimeric alpha+beta barrel"/>
    <property type="match status" value="1"/>
</dbReference>
<dbReference type="PROSITE" id="PS51725">
    <property type="entry name" value="ABM"/>
    <property type="match status" value="1"/>
</dbReference>
<accession>Q2FK96</accession>
<feature type="chain" id="PRO_0000270096" description="Heme oxygenase (staphylobilin-producing) 2">
    <location>
        <begin position="1"/>
        <end position="108"/>
    </location>
</feature>
<feature type="domain" description="ABM" evidence="1">
    <location>
        <begin position="2"/>
        <end position="93"/>
    </location>
</feature>
<feature type="binding site" evidence="1">
    <location>
        <position position="6"/>
    </location>
    <ligand>
        <name>Fe cation</name>
        <dbReference type="ChEBI" id="CHEBI:24875"/>
    </ligand>
</feature>
<feature type="binding site" evidence="1">
    <location>
        <begin position="21"/>
        <end position="28"/>
    </location>
    <ligand>
        <name>heme</name>
        <dbReference type="ChEBI" id="CHEBI:30413"/>
    </ligand>
</feature>
<feature type="binding site" description="axial binding residue" evidence="1">
    <location>
        <position position="76"/>
    </location>
    <ligand>
        <name>heme</name>
        <dbReference type="ChEBI" id="CHEBI:30413"/>
    </ligand>
    <ligandPart>
        <name>Fe</name>
        <dbReference type="ChEBI" id="CHEBI:18248"/>
    </ligandPart>
</feature>
<feature type="site" description="Transition state stabilizer" evidence="1">
    <location>
        <position position="66"/>
    </location>
</feature>
<evidence type="ECO:0000255" key="1">
    <source>
        <dbReference type="HAMAP-Rule" id="MF_01272"/>
    </source>
</evidence>
<sequence length="108" mass="12791">MFMAENRLQLQKGSAEETIERFYNRQGIETIEGFQQMFVTKTLNTEDTDEVKILTIWESEDSFNNWLNSDVFKEAHKNVRLKSDDDGQQSPILSNKVFKYDIGYHYQK</sequence>
<proteinExistence type="inferred from homology"/>
<name>HDOX2_STAA3</name>
<gene>
    <name type="primary">isdI</name>
    <name type="ordered locus">SAUSA300_0168</name>
</gene>
<reference key="1">
    <citation type="journal article" date="2006" name="Lancet">
        <title>Complete genome sequence of USA300, an epidemic clone of community-acquired meticillin-resistant Staphylococcus aureus.</title>
        <authorList>
            <person name="Diep B.A."/>
            <person name="Gill S.R."/>
            <person name="Chang R.F."/>
            <person name="Phan T.H."/>
            <person name="Chen J.H."/>
            <person name="Davidson M.G."/>
            <person name="Lin F."/>
            <person name="Lin J."/>
            <person name="Carleton H.A."/>
            <person name="Mongodin E.F."/>
            <person name="Sensabaugh G.F."/>
            <person name="Perdreau-Remington F."/>
        </authorList>
    </citation>
    <scope>NUCLEOTIDE SEQUENCE [LARGE SCALE GENOMIC DNA]</scope>
    <source>
        <strain>USA300</strain>
    </source>
</reference>
<organism>
    <name type="scientific">Staphylococcus aureus (strain USA300)</name>
    <dbReference type="NCBI Taxonomy" id="367830"/>
    <lineage>
        <taxon>Bacteria</taxon>
        <taxon>Bacillati</taxon>
        <taxon>Bacillota</taxon>
        <taxon>Bacilli</taxon>
        <taxon>Bacillales</taxon>
        <taxon>Staphylococcaceae</taxon>
        <taxon>Staphylococcus</taxon>
    </lineage>
</organism>
<keyword id="KW-0963">Cytoplasm</keyword>
<keyword id="KW-0349">Heme</keyword>
<keyword id="KW-0408">Iron</keyword>
<keyword id="KW-0479">Metal-binding</keyword>
<keyword id="KW-0503">Monooxygenase</keyword>
<keyword id="KW-0560">Oxidoreductase</keyword>